<name>RUTE_ENT38</name>
<comment type="function">
    <text evidence="1">May reduce toxic product malonic semialdehyde to 3-hydroxypropionic acid, which is excreted.</text>
</comment>
<comment type="catalytic activity">
    <reaction evidence="1">
        <text>3-hydroxypropanoate + NADP(+) = 3-oxopropanoate + NADPH + H(+)</text>
        <dbReference type="Rhea" id="RHEA:26438"/>
        <dbReference type="ChEBI" id="CHEBI:15378"/>
        <dbReference type="ChEBI" id="CHEBI:16510"/>
        <dbReference type="ChEBI" id="CHEBI:33190"/>
        <dbReference type="ChEBI" id="CHEBI:57783"/>
        <dbReference type="ChEBI" id="CHEBI:58349"/>
        <dbReference type="EC" id="1.1.1.298"/>
    </reaction>
</comment>
<comment type="cofactor">
    <cofactor evidence="1">
        <name>FMN</name>
        <dbReference type="ChEBI" id="CHEBI:58210"/>
    </cofactor>
</comment>
<comment type="similarity">
    <text evidence="1">Belongs to the nitroreductase family. HadB/RutE subfamily.</text>
</comment>
<sequence length="196" mass="21688">MSEAITPTAMKTLFTEARTHNGWQEMPVSDETLREIYDLMKWGPTSANCSPARIVFVRTPEGKEKLRPSLSSGNLAKTLAAPVTAIIAWDSEFYERLPELFPHGDARSWFTSSPALAEETAFRNSAMQAAYLIFACRALGLDTGPMSGFDRQKVDEAFFTGTTLKSNLLINIGYGDFSKVYGRLPRLSFEDACGLV</sequence>
<organism>
    <name type="scientific">Enterobacter sp. (strain 638)</name>
    <dbReference type="NCBI Taxonomy" id="399742"/>
    <lineage>
        <taxon>Bacteria</taxon>
        <taxon>Pseudomonadati</taxon>
        <taxon>Pseudomonadota</taxon>
        <taxon>Gammaproteobacteria</taxon>
        <taxon>Enterobacterales</taxon>
        <taxon>Enterobacteriaceae</taxon>
        <taxon>Enterobacter</taxon>
    </lineage>
</organism>
<dbReference type="EC" id="1.1.1.298" evidence="1"/>
<dbReference type="EMBL" id="CP000653">
    <property type="protein sequence ID" value="ABP60201.1"/>
    <property type="molecule type" value="Genomic_DNA"/>
</dbReference>
<dbReference type="RefSeq" id="WP_012016918.1">
    <property type="nucleotide sequence ID" value="NC_009436.1"/>
</dbReference>
<dbReference type="SMR" id="A4W921"/>
<dbReference type="STRING" id="399742.Ent638_1521"/>
<dbReference type="KEGG" id="ent:Ent638_1521"/>
<dbReference type="eggNOG" id="COG0778">
    <property type="taxonomic scope" value="Bacteria"/>
</dbReference>
<dbReference type="HOGENOM" id="CLU_084441_0_0_6"/>
<dbReference type="OrthoDB" id="9784375at2"/>
<dbReference type="Proteomes" id="UP000000230">
    <property type="component" value="Chromosome"/>
</dbReference>
<dbReference type="GO" id="GO:0035527">
    <property type="term" value="F:3-hydroxypropionate dehydrogenase (NADP+) activity"/>
    <property type="evidence" value="ECO:0007669"/>
    <property type="project" value="UniProtKB-UniRule"/>
</dbReference>
<dbReference type="GO" id="GO:0019740">
    <property type="term" value="P:nitrogen utilization"/>
    <property type="evidence" value="ECO:0007669"/>
    <property type="project" value="UniProtKB-UniRule"/>
</dbReference>
<dbReference type="GO" id="GO:0006212">
    <property type="term" value="P:uracil catabolic process"/>
    <property type="evidence" value="ECO:0007669"/>
    <property type="project" value="UniProtKB-UniRule"/>
</dbReference>
<dbReference type="CDD" id="cd02148">
    <property type="entry name" value="RutE-like"/>
    <property type="match status" value="1"/>
</dbReference>
<dbReference type="Gene3D" id="3.40.109.10">
    <property type="entry name" value="NADH Oxidase"/>
    <property type="match status" value="1"/>
</dbReference>
<dbReference type="HAMAP" id="MF_01204">
    <property type="entry name" value="Oxidoreductase_RutE_HadB"/>
    <property type="match status" value="1"/>
</dbReference>
<dbReference type="InterPro" id="IPR029479">
    <property type="entry name" value="Nitroreductase"/>
</dbReference>
<dbReference type="InterPro" id="IPR000415">
    <property type="entry name" value="Nitroreductase-like"/>
</dbReference>
<dbReference type="InterPro" id="IPR050461">
    <property type="entry name" value="Nitroreductase_HadB/RutE"/>
</dbReference>
<dbReference type="InterPro" id="IPR023936">
    <property type="entry name" value="RutE-like"/>
</dbReference>
<dbReference type="NCBIfam" id="NF003768">
    <property type="entry name" value="PRK05365.1"/>
    <property type="match status" value="1"/>
</dbReference>
<dbReference type="PANTHER" id="PTHR43543">
    <property type="entry name" value="MALONIC SEMIALDEHYDE REDUCTASE RUTE-RELATED"/>
    <property type="match status" value="1"/>
</dbReference>
<dbReference type="PANTHER" id="PTHR43543:SF1">
    <property type="entry name" value="MALONIC SEMIALDEHYDE REDUCTASE RUTE-RELATED"/>
    <property type="match status" value="1"/>
</dbReference>
<dbReference type="Pfam" id="PF00881">
    <property type="entry name" value="Nitroreductase"/>
    <property type="match status" value="1"/>
</dbReference>
<dbReference type="SUPFAM" id="SSF55469">
    <property type="entry name" value="FMN-dependent nitroreductase-like"/>
    <property type="match status" value="1"/>
</dbReference>
<gene>
    <name evidence="1" type="primary">rutE</name>
    <name type="ordered locus">Ent638_1521</name>
</gene>
<protein>
    <recommendedName>
        <fullName evidence="1">Probable malonic semialdehyde reductase RutE</fullName>
        <ecNumber evidence="1">1.1.1.298</ecNumber>
    </recommendedName>
</protein>
<feature type="chain" id="PRO_1000066140" description="Probable malonic semialdehyde reductase RutE">
    <location>
        <begin position="1"/>
        <end position="196"/>
    </location>
</feature>
<accession>A4W921</accession>
<proteinExistence type="inferred from homology"/>
<evidence type="ECO:0000255" key="1">
    <source>
        <dbReference type="HAMAP-Rule" id="MF_01204"/>
    </source>
</evidence>
<reference key="1">
    <citation type="journal article" date="2010" name="PLoS Genet.">
        <title>Genome sequence of the plant growth promoting endophytic bacterium Enterobacter sp. 638.</title>
        <authorList>
            <person name="Taghavi S."/>
            <person name="van der Lelie D."/>
            <person name="Hoffman A."/>
            <person name="Zhang Y.B."/>
            <person name="Walla M.D."/>
            <person name="Vangronsveld J."/>
            <person name="Newman L."/>
            <person name="Monchy S."/>
        </authorList>
    </citation>
    <scope>NUCLEOTIDE SEQUENCE [LARGE SCALE GENOMIC DNA]</scope>
    <source>
        <strain>638</strain>
    </source>
</reference>
<keyword id="KW-0285">Flavoprotein</keyword>
<keyword id="KW-0288">FMN</keyword>
<keyword id="KW-0520">NAD</keyword>
<keyword id="KW-0521">NADP</keyword>
<keyword id="KW-0560">Oxidoreductase</keyword>